<organism>
    <name type="scientific">Proteus mirabilis (strain HI4320)</name>
    <dbReference type="NCBI Taxonomy" id="529507"/>
    <lineage>
        <taxon>Bacteria</taxon>
        <taxon>Pseudomonadati</taxon>
        <taxon>Pseudomonadota</taxon>
        <taxon>Gammaproteobacteria</taxon>
        <taxon>Enterobacterales</taxon>
        <taxon>Morganellaceae</taxon>
        <taxon>Proteus</taxon>
    </lineage>
</organism>
<reference key="1">
    <citation type="journal article" date="2008" name="J. Bacteriol.">
        <title>Complete genome sequence of uropathogenic Proteus mirabilis, a master of both adherence and motility.</title>
        <authorList>
            <person name="Pearson M.M."/>
            <person name="Sebaihia M."/>
            <person name="Churcher C."/>
            <person name="Quail M.A."/>
            <person name="Seshasayee A.S."/>
            <person name="Luscombe N.M."/>
            <person name="Abdellah Z."/>
            <person name="Arrosmith C."/>
            <person name="Atkin B."/>
            <person name="Chillingworth T."/>
            <person name="Hauser H."/>
            <person name="Jagels K."/>
            <person name="Moule S."/>
            <person name="Mungall K."/>
            <person name="Norbertczak H."/>
            <person name="Rabbinowitsch E."/>
            <person name="Walker D."/>
            <person name="Whithead S."/>
            <person name="Thomson N.R."/>
            <person name="Rather P.N."/>
            <person name="Parkhill J."/>
            <person name="Mobley H.L.T."/>
        </authorList>
    </citation>
    <scope>NUCLEOTIDE SEQUENCE [LARGE SCALE GENOMIC DNA]</scope>
    <source>
        <strain>HI4320</strain>
    </source>
</reference>
<protein>
    <recommendedName>
        <fullName evidence="1">UPF0325 protein PMI2289</fullName>
    </recommendedName>
</protein>
<comment type="similarity">
    <text evidence="1">Belongs to the UPF0325 family.</text>
</comment>
<gene>
    <name type="ordered locus">PMI2289</name>
</gene>
<sequence>MYDNLKNLGIQHPEDIDRYTLRQEANNDILKIYFRKDKGEFFAKSVKFKYPRQRKTISDTQSGQGFKEVNEINTNLRYVIEELDQICQQDQVEVDLKHKILDDLRHLEHVVANKIAEIEADLEKLTRR</sequence>
<keyword id="KW-1185">Reference proteome</keyword>
<dbReference type="EMBL" id="AM942759">
    <property type="protein sequence ID" value="CAR44526.1"/>
    <property type="molecule type" value="Genomic_DNA"/>
</dbReference>
<dbReference type="RefSeq" id="WP_004245482.1">
    <property type="nucleotide sequence ID" value="NC_010554.1"/>
</dbReference>
<dbReference type="SMR" id="B4F2D7"/>
<dbReference type="EnsemblBacteria" id="CAR44526">
    <property type="protein sequence ID" value="CAR44526"/>
    <property type="gene ID" value="PMI2289"/>
</dbReference>
<dbReference type="GeneID" id="6802944"/>
<dbReference type="KEGG" id="pmr:PMI2289"/>
<dbReference type="eggNOG" id="ENOG502ZBV4">
    <property type="taxonomic scope" value="Bacteria"/>
</dbReference>
<dbReference type="HOGENOM" id="CLU_136774_0_0_6"/>
<dbReference type="Proteomes" id="UP000008319">
    <property type="component" value="Chromosome"/>
</dbReference>
<dbReference type="HAMAP" id="MF_01519">
    <property type="entry name" value="UPF0325"/>
    <property type="match status" value="1"/>
</dbReference>
<dbReference type="InterPro" id="IPR020911">
    <property type="entry name" value="UPF0325"/>
</dbReference>
<dbReference type="NCBIfam" id="NF010213">
    <property type="entry name" value="PRK13677.1"/>
    <property type="match status" value="1"/>
</dbReference>
<dbReference type="Pfam" id="PF11944">
    <property type="entry name" value="DUF3461"/>
    <property type="match status" value="1"/>
</dbReference>
<evidence type="ECO:0000255" key="1">
    <source>
        <dbReference type="HAMAP-Rule" id="MF_01519"/>
    </source>
</evidence>
<accession>B4F2D7</accession>
<feature type="chain" id="PRO_1000198434" description="UPF0325 protein PMI2289">
    <location>
        <begin position="1"/>
        <end position="128"/>
    </location>
</feature>
<proteinExistence type="inferred from homology"/>
<name>Y2289_PROMH</name>